<dbReference type="EC" id="6.1.1.19" evidence="1"/>
<dbReference type="EMBL" id="CP000792">
    <property type="protein sequence ID" value="EAT99295.1"/>
    <property type="molecule type" value="Genomic_DNA"/>
</dbReference>
<dbReference type="RefSeq" id="WP_012140265.1">
    <property type="nucleotide sequence ID" value="NC_009802.2"/>
</dbReference>
<dbReference type="SMR" id="A7ZF21"/>
<dbReference type="STRING" id="360104.CCC13826_0543"/>
<dbReference type="KEGG" id="cco:CCC13826_0543"/>
<dbReference type="eggNOG" id="COG0018">
    <property type="taxonomic scope" value="Bacteria"/>
</dbReference>
<dbReference type="HOGENOM" id="CLU_006406_0_1_7"/>
<dbReference type="OrthoDB" id="9803211at2"/>
<dbReference type="Proteomes" id="UP000001121">
    <property type="component" value="Chromosome"/>
</dbReference>
<dbReference type="GO" id="GO:0005737">
    <property type="term" value="C:cytoplasm"/>
    <property type="evidence" value="ECO:0007669"/>
    <property type="project" value="UniProtKB-SubCell"/>
</dbReference>
<dbReference type="GO" id="GO:0004814">
    <property type="term" value="F:arginine-tRNA ligase activity"/>
    <property type="evidence" value="ECO:0007669"/>
    <property type="project" value="UniProtKB-UniRule"/>
</dbReference>
<dbReference type="GO" id="GO:0005524">
    <property type="term" value="F:ATP binding"/>
    <property type="evidence" value="ECO:0007669"/>
    <property type="project" value="UniProtKB-UniRule"/>
</dbReference>
<dbReference type="GO" id="GO:0006420">
    <property type="term" value="P:arginyl-tRNA aminoacylation"/>
    <property type="evidence" value="ECO:0007669"/>
    <property type="project" value="UniProtKB-UniRule"/>
</dbReference>
<dbReference type="CDD" id="cd00671">
    <property type="entry name" value="ArgRS_core"/>
    <property type="match status" value="1"/>
</dbReference>
<dbReference type="FunFam" id="3.40.50.620:FF:000062">
    <property type="entry name" value="Arginine--tRNA ligase"/>
    <property type="match status" value="1"/>
</dbReference>
<dbReference type="Gene3D" id="3.30.1360.70">
    <property type="entry name" value="Arginyl tRNA synthetase N-terminal domain"/>
    <property type="match status" value="1"/>
</dbReference>
<dbReference type="Gene3D" id="3.40.50.620">
    <property type="entry name" value="HUPs"/>
    <property type="match status" value="1"/>
</dbReference>
<dbReference type="Gene3D" id="1.10.730.10">
    <property type="entry name" value="Isoleucyl-tRNA Synthetase, Domain 1"/>
    <property type="match status" value="1"/>
</dbReference>
<dbReference type="HAMAP" id="MF_00123">
    <property type="entry name" value="Arg_tRNA_synth"/>
    <property type="match status" value="1"/>
</dbReference>
<dbReference type="InterPro" id="IPR001412">
    <property type="entry name" value="aa-tRNA-synth_I_CS"/>
</dbReference>
<dbReference type="InterPro" id="IPR001278">
    <property type="entry name" value="Arg-tRNA-ligase"/>
</dbReference>
<dbReference type="InterPro" id="IPR005148">
    <property type="entry name" value="Arg-tRNA-synth_N"/>
</dbReference>
<dbReference type="InterPro" id="IPR036695">
    <property type="entry name" value="Arg-tRNA-synth_N_sf"/>
</dbReference>
<dbReference type="InterPro" id="IPR035684">
    <property type="entry name" value="ArgRS_core"/>
</dbReference>
<dbReference type="InterPro" id="IPR008909">
    <property type="entry name" value="DALR_anticod-bd"/>
</dbReference>
<dbReference type="InterPro" id="IPR014729">
    <property type="entry name" value="Rossmann-like_a/b/a_fold"/>
</dbReference>
<dbReference type="InterPro" id="IPR009080">
    <property type="entry name" value="tRNAsynth_Ia_anticodon-bd"/>
</dbReference>
<dbReference type="NCBIfam" id="TIGR00456">
    <property type="entry name" value="argS"/>
    <property type="match status" value="1"/>
</dbReference>
<dbReference type="PANTHER" id="PTHR11956:SF5">
    <property type="entry name" value="ARGININE--TRNA LIGASE, CYTOPLASMIC"/>
    <property type="match status" value="1"/>
</dbReference>
<dbReference type="PANTHER" id="PTHR11956">
    <property type="entry name" value="ARGINYL-TRNA SYNTHETASE"/>
    <property type="match status" value="1"/>
</dbReference>
<dbReference type="Pfam" id="PF03485">
    <property type="entry name" value="Arg_tRNA_synt_N"/>
    <property type="match status" value="1"/>
</dbReference>
<dbReference type="Pfam" id="PF05746">
    <property type="entry name" value="DALR_1"/>
    <property type="match status" value="1"/>
</dbReference>
<dbReference type="Pfam" id="PF00750">
    <property type="entry name" value="tRNA-synt_1d"/>
    <property type="match status" value="1"/>
</dbReference>
<dbReference type="PRINTS" id="PR01038">
    <property type="entry name" value="TRNASYNTHARG"/>
</dbReference>
<dbReference type="SMART" id="SM01016">
    <property type="entry name" value="Arg_tRNA_synt_N"/>
    <property type="match status" value="1"/>
</dbReference>
<dbReference type="SMART" id="SM00836">
    <property type="entry name" value="DALR_1"/>
    <property type="match status" value="1"/>
</dbReference>
<dbReference type="SUPFAM" id="SSF47323">
    <property type="entry name" value="Anticodon-binding domain of a subclass of class I aminoacyl-tRNA synthetases"/>
    <property type="match status" value="1"/>
</dbReference>
<dbReference type="SUPFAM" id="SSF55190">
    <property type="entry name" value="Arginyl-tRNA synthetase (ArgRS), N-terminal 'additional' domain"/>
    <property type="match status" value="1"/>
</dbReference>
<dbReference type="SUPFAM" id="SSF52374">
    <property type="entry name" value="Nucleotidylyl transferase"/>
    <property type="match status" value="1"/>
</dbReference>
<dbReference type="PROSITE" id="PS00178">
    <property type="entry name" value="AA_TRNA_LIGASE_I"/>
    <property type="match status" value="1"/>
</dbReference>
<feature type="chain" id="PRO_1000018007" description="Arginine--tRNA ligase">
    <location>
        <begin position="1"/>
        <end position="527"/>
    </location>
</feature>
<feature type="short sequence motif" description="'HIGH' region">
    <location>
        <begin position="111"/>
        <end position="121"/>
    </location>
</feature>
<gene>
    <name evidence="1" type="primary">argS</name>
    <name type="ordered locus">Ccon26_15320</name>
    <name type="ORF">CCC13826_0543</name>
</gene>
<protein>
    <recommendedName>
        <fullName evidence="1">Arginine--tRNA ligase</fullName>
        <ecNumber evidence="1">6.1.1.19</ecNumber>
    </recommendedName>
    <alternativeName>
        <fullName evidence="1">Arginyl-tRNA synthetase</fullName>
        <shortName evidence="1">ArgRS</shortName>
    </alternativeName>
</protein>
<sequence length="527" mass="59455">MKDKVKAEISKVLEREFVLEKPKDKNLAHYATPLFSLAKELRKSPAMIASEFADKFSDSKIVEASAVNGYLNFKLKSEFLDEISKQILLDSENFAKEDAKKDSYLIEYISANPTGPLHIGHVRGAVYGDTLARLGKRLGYAISTEYYINDAGNQIDLLGTSISLAAKEQLFNESVVYPEKYYRGDYILDIAKLANEKFGKEIFYDESRNLELAEFGKDIVLEIIKKDLADVGIFIESWASEKALYDGLEPTINKLKRSNQMYEKEGATYIASTTLGDDNDRVVVRNDGRPTYLAGDIIYHNAKFEKNFDHYINIWGADHHGYIARLKAAINFLGYDENRLEVILMQMVSLLKEGKPYKMSKRAGNAVLMSDIASEIGAEALRFIFISKANTSSLEFDVDELKKEDSSNPIFYINYAHARINQIFAKAGKSVSDVINADFECLDENSKNLLFEALILPEILEDAFASRQLQKIPDYLKSLAASFHKFYNENRVVGNENEDSLLKVFAVVAVSIKTAFNIMGITAKDRM</sequence>
<name>SYR_CAMC1</name>
<comment type="catalytic activity">
    <reaction evidence="1">
        <text>tRNA(Arg) + L-arginine + ATP = L-arginyl-tRNA(Arg) + AMP + diphosphate</text>
        <dbReference type="Rhea" id="RHEA:20301"/>
        <dbReference type="Rhea" id="RHEA-COMP:9658"/>
        <dbReference type="Rhea" id="RHEA-COMP:9673"/>
        <dbReference type="ChEBI" id="CHEBI:30616"/>
        <dbReference type="ChEBI" id="CHEBI:32682"/>
        <dbReference type="ChEBI" id="CHEBI:33019"/>
        <dbReference type="ChEBI" id="CHEBI:78442"/>
        <dbReference type="ChEBI" id="CHEBI:78513"/>
        <dbReference type="ChEBI" id="CHEBI:456215"/>
        <dbReference type="EC" id="6.1.1.19"/>
    </reaction>
</comment>
<comment type="subunit">
    <text evidence="1">Monomer.</text>
</comment>
<comment type="subcellular location">
    <subcellularLocation>
        <location evidence="1">Cytoplasm</location>
    </subcellularLocation>
</comment>
<comment type="similarity">
    <text evidence="1">Belongs to the class-I aminoacyl-tRNA synthetase family.</text>
</comment>
<keyword id="KW-0030">Aminoacyl-tRNA synthetase</keyword>
<keyword id="KW-0067">ATP-binding</keyword>
<keyword id="KW-0963">Cytoplasm</keyword>
<keyword id="KW-0436">Ligase</keyword>
<keyword id="KW-0547">Nucleotide-binding</keyword>
<keyword id="KW-0648">Protein biosynthesis</keyword>
<evidence type="ECO:0000255" key="1">
    <source>
        <dbReference type="HAMAP-Rule" id="MF_00123"/>
    </source>
</evidence>
<organism>
    <name type="scientific">Campylobacter concisus (strain 13826)</name>
    <dbReference type="NCBI Taxonomy" id="360104"/>
    <lineage>
        <taxon>Bacteria</taxon>
        <taxon>Pseudomonadati</taxon>
        <taxon>Campylobacterota</taxon>
        <taxon>Epsilonproteobacteria</taxon>
        <taxon>Campylobacterales</taxon>
        <taxon>Campylobacteraceae</taxon>
        <taxon>Campylobacter</taxon>
    </lineage>
</organism>
<reference key="1">
    <citation type="submission" date="2007-10" db="EMBL/GenBank/DDBJ databases">
        <title>Genome sequence of Campylobacter concisus 13826 isolated from human feces.</title>
        <authorList>
            <person name="Fouts D.E."/>
            <person name="Mongodin E.F."/>
            <person name="Puiu D."/>
            <person name="Sebastian Y."/>
            <person name="Miller W.G."/>
            <person name="Mandrell R.E."/>
            <person name="On S."/>
            <person name="Nelson K.E."/>
        </authorList>
    </citation>
    <scope>NUCLEOTIDE SEQUENCE [LARGE SCALE GENOMIC DNA]</scope>
    <source>
        <strain>13826</strain>
    </source>
</reference>
<accession>A7ZF21</accession>
<proteinExistence type="inferred from homology"/>